<gene>
    <name type="primary">YDJ1</name>
    <name type="synonym">MAS5</name>
    <name type="ordered locus">YNL064C</name>
    <name type="ORF">N2418</name>
    <name type="ORF">YNL2418C</name>
</gene>
<feature type="chain" id="PRO_0000071093" description="Mitochondrial protein import protein MAS5">
    <location>
        <begin position="1"/>
        <end position="406"/>
    </location>
</feature>
<feature type="propeptide" id="PRO_0000396684" description="Removed in mature form" evidence="6">
    <location>
        <begin position="407"/>
        <end position="409"/>
    </location>
</feature>
<feature type="domain" description="J">
    <location>
        <begin position="4"/>
        <end position="72"/>
    </location>
</feature>
<feature type="repeat" description="CXXCXGXG motif">
    <location>
        <begin position="143"/>
        <end position="150"/>
    </location>
</feature>
<feature type="repeat" description="CXXCXGXG motif">
    <location>
        <begin position="159"/>
        <end position="166"/>
    </location>
</feature>
<feature type="repeat" description="CXXCXGXG motif">
    <location>
        <begin position="185"/>
        <end position="192"/>
    </location>
</feature>
<feature type="repeat" description="CXXCXGXG motif">
    <location>
        <begin position="201"/>
        <end position="208"/>
    </location>
</feature>
<feature type="zinc finger region" description="CR-type">
    <location>
        <begin position="130"/>
        <end position="213"/>
    </location>
</feature>
<feature type="region of interest" description="Necessary for HAP1 repression in the absence of heme">
    <location>
        <begin position="1"/>
        <end position="172"/>
    </location>
</feature>
<feature type="region of interest" description="Disordered" evidence="1">
    <location>
        <begin position="382"/>
        <end position="409"/>
    </location>
</feature>
<feature type="binding site">
    <location>
        <position position="116"/>
    </location>
    <ligand>
        <name>substrate</name>
    </ligand>
</feature>
<feature type="binding site">
    <location>
        <begin position="135"/>
        <end position="137"/>
    </location>
    <ligand>
        <name>substrate</name>
    </ligand>
</feature>
<feature type="binding site">
    <location>
        <position position="143"/>
    </location>
    <ligand>
        <name>Zn(2+)</name>
        <dbReference type="ChEBI" id="CHEBI:29105"/>
        <label>1</label>
    </ligand>
</feature>
<feature type="binding site">
    <location>
        <position position="146"/>
    </location>
    <ligand>
        <name>Zn(2+)</name>
        <dbReference type="ChEBI" id="CHEBI:29105"/>
        <label>1</label>
    </ligand>
</feature>
<feature type="binding site">
    <location>
        <position position="159"/>
    </location>
    <ligand>
        <name>Zn(2+)</name>
        <dbReference type="ChEBI" id="CHEBI:29105"/>
        <label>2</label>
    </ligand>
</feature>
<feature type="binding site">
    <location>
        <position position="162"/>
    </location>
    <ligand>
        <name>Zn(2+)</name>
        <dbReference type="ChEBI" id="CHEBI:29105"/>
        <label>2</label>
    </ligand>
</feature>
<feature type="binding site">
    <location>
        <position position="185"/>
    </location>
    <ligand>
        <name>Zn(2+)</name>
        <dbReference type="ChEBI" id="CHEBI:29105"/>
        <label>2</label>
    </ligand>
</feature>
<feature type="binding site">
    <location>
        <position position="188"/>
    </location>
    <ligand>
        <name>Zn(2+)</name>
        <dbReference type="ChEBI" id="CHEBI:29105"/>
        <label>2</label>
    </ligand>
</feature>
<feature type="binding site">
    <location>
        <position position="201"/>
    </location>
    <ligand>
        <name>Zn(2+)</name>
        <dbReference type="ChEBI" id="CHEBI:29105"/>
        <label>1</label>
    </ligand>
</feature>
<feature type="binding site">
    <location>
        <position position="204"/>
    </location>
    <ligand>
        <name>Zn(2+)</name>
        <dbReference type="ChEBI" id="CHEBI:29105"/>
        <label>1</label>
    </ligand>
</feature>
<feature type="binding site">
    <location>
        <begin position="215"/>
        <end position="216"/>
    </location>
    <ligand>
        <name>substrate</name>
    </ligand>
</feature>
<feature type="binding site">
    <location>
        <begin position="247"/>
        <end position="249"/>
    </location>
    <ligand>
        <name>substrate</name>
    </ligand>
</feature>
<feature type="site" description="Involved in dimerization">
    <location>
        <position position="335"/>
    </location>
</feature>
<feature type="modified residue" description="Cysteine methyl ester" evidence="6">
    <location>
        <position position="406"/>
    </location>
</feature>
<feature type="lipid moiety-binding region" description="S-farnesyl cysteine" evidence="5">
    <location>
        <position position="406"/>
    </location>
</feature>
<feature type="cross-link" description="Glycyl lysine isopeptide (Lys-Gly) (interchain with G-Cter in ubiquitin)" evidence="7">
    <location>
        <position position="198"/>
    </location>
</feature>
<feature type="mutagenesis site" description="Prevents dimerization." evidence="4">
    <original>F</original>
    <variation>D</variation>
    <location>
        <position position="335"/>
    </location>
</feature>
<feature type="helix" evidence="10">
    <location>
        <begin position="6"/>
        <end position="11"/>
    </location>
</feature>
<feature type="helix" evidence="10">
    <location>
        <begin position="19"/>
        <end position="33"/>
    </location>
</feature>
<feature type="turn" evidence="10">
    <location>
        <begin position="35"/>
        <end position="37"/>
    </location>
</feature>
<feature type="helix" evidence="10">
    <location>
        <begin position="41"/>
        <end position="57"/>
    </location>
</feature>
<feature type="helix" evidence="10">
    <location>
        <begin position="60"/>
        <end position="69"/>
    </location>
</feature>
<feature type="strand" evidence="8">
    <location>
        <begin position="116"/>
        <end position="122"/>
    </location>
</feature>
<feature type="helix" evidence="8">
    <location>
        <begin position="126"/>
        <end position="129"/>
    </location>
</feature>
<feature type="strand" evidence="8">
    <location>
        <begin position="131"/>
        <end position="142"/>
    </location>
</feature>
<feature type="turn" evidence="8">
    <location>
        <begin position="144"/>
        <end position="148"/>
    </location>
</feature>
<feature type="strand" evidence="8">
    <location>
        <begin position="150"/>
        <end position="152"/>
    </location>
</feature>
<feature type="turn" evidence="8">
    <location>
        <begin position="153"/>
        <end position="155"/>
    </location>
</feature>
<feature type="strand" evidence="8">
    <location>
        <begin position="162"/>
        <end position="166"/>
    </location>
</feature>
<feature type="strand" evidence="8">
    <location>
        <begin position="168"/>
        <end position="182"/>
    </location>
</feature>
<feature type="strand" evidence="8">
    <location>
        <begin position="189"/>
        <end position="193"/>
    </location>
</feature>
<feature type="strand" evidence="8">
    <location>
        <begin position="202"/>
        <end position="204"/>
    </location>
</feature>
<feature type="strand" evidence="8">
    <location>
        <begin position="209"/>
        <end position="220"/>
    </location>
</feature>
<feature type="strand" evidence="8">
    <location>
        <begin position="229"/>
        <end position="232"/>
    </location>
</feature>
<feature type="strand" evidence="8">
    <location>
        <begin position="247"/>
        <end position="253"/>
    </location>
</feature>
<feature type="strand" evidence="9">
    <location>
        <begin position="260"/>
        <end position="262"/>
    </location>
</feature>
<feature type="strand" evidence="9">
    <location>
        <begin position="265"/>
        <end position="273"/>
    </location>
</feature>
<feature type="helix" evidence="9">
    <location>
        <begin position="274"/>
        <end position="279"/>
    </location>
</feature>
<feature type="strand" evidence="9">
    <location>
        <begin position="281"/>
        <end position="286"/>
    </location>
</feature>
<feature type="strand" evidence="8">
    <location>
        <begin position="288"/>
        <end position="290"/>
    </location>
</feature>
<feature type="strand" evidence="9">
    <location>
        <begin position="292"/>
        <end position="297"/>
    </location>
</feature>
<feature type="turn" evidence="8">
    <location>
        <begin position="299"/>
        <end position="302"/>
    </location>
</feature>
<feature type="strand" evidence="9">
    <location>
        <begin position="308"/>
        <end position="311"/>
    </location>
</feature>
<feature type="strand" evidence="8">
    <location>
        <begin position="319"/>
        <end position="321"/>
    </location>
</feature>
<feature type="strand" evidence="9">
    <location>
        <begin position="327"/>
        <end position="334"/>
    </location>
</feature>
<feature type="helix" evidence="9">
    <location>
        <begin position="343"/>
        <end position="352"/>
    </location>
</feature>
<feature type="strand" evidence="9">
    <location>
        <begin position="367"/>
        <end position="371"/>
    </location>
</feature>
<protein>
    <recommendedName>
        <fullName>Mitochondrial protein import protein MAS5</fullName>
    </recommendedName>
    <alternativeName>
        <fullName>Yeast dnaJ protein 1</fullName>
    </alternativeName>
</protein>
<name>MAS5_YEAST</name>
<accession>P25491</accession>
<accession>D6W1B6</accession>
<evidence type="ECO:0000256" key="1">
    <source>
        <dbReference type="SAM" id="MobiDB-lite"/>
    </source>
</evidence>
<evidence type="ECO:0000269" key="2">
    <source>
    </source>
</evidence>
<evidence type="ECO:0000269" key="3">
    <source>
    </source>
</evidence>
<evidence type="ECO:0000269" key="4">
    <source>
    </source>
</evidence>
<evidence type="ECO:0000269" key="5">
    <source>
    </source>
</evidence>
<evidence type="ECO:0000305" key="6"/>
<evidence type="ECO:0007744" key="7">
    <source>
    </source>
</evidence>
<evidence type="ECO:0007829" key="8">
    <source>
        <dbReference type="PDB" id="1NLT"/>
    </source>
</evidence>
<evidence type="ECO:0007829" key="9">
    <source>
        <dbReference type="PDB" id="1XAO"/>
    </source>
</evidence>
<evidence type="ECO:0007829" key="10">
    <source>
        <dbReference type="PDB" id="5VSO"/>
    </source>
</evidence>
<comment type="function">
    <text evidence="2">Probably involved in mitochondrial protein import. Is also required for efficient translocation of pre-pro-alpha-factor. Involved in heme regulation of HAP1, as a component of the high-molecular-weight (HMC) complex.</text>
</comment>
<comment type="subunit">
    <text evidence="2 4">Homodimer. Interacts with HAP1. Component of the HMC including HAP1, SRO9 and YDJ1.</text>
</comment>
<comment type="interaction">
    <interactant intactId="EBI-10420">
        <id>P25491</id>
    </interactant>
    <interactant intactId="EBI-34904">
        <id>Q12285</id>
        <label>MDY2</label>
    </interactant>
    <organismsDiffer>false</organismsDiffer>
    <experiments>2</experiments>
</comment>
<comment type="interaction">
    <interactant intactId="EBI-10420">
        <id>P25491</id>
    </interactant>
    <interactant intactId="EBI-31784">
        <id>Q12118</id>
        <label>SGT2</label>
    </interactant>
    <organismsDiffer>false</organismsDiffer>
    <experiments>2</experiments>
</comment>
<comment type="interaction">
    <interactant intactId="EBI-10420">
        <id>P25491</id>
    </interactant>
    <interactant intactId="EBI-8411471">
        <id>Q7LKB1</id>
        <label>SUP35</label>
    </interactant>
    <organismsDiffer>true</organismsDiffer>
    <experiments>3</experiments>
</comment>
<comment type="subcellular location">
    <subcellularLocation>
        <location>Cytoplasm</location>
    </subcellularLocation>
    <subcellularLocation>
        <location>Cytoplasm</location>
        <location>Perinuclear region</location>
    </subcellularLocation>
    <text>Concentrated in a perinuclear ring as well as in the cytoplasm.</text>
</comment>
<comment type="induction">
    <text>YDJ1 is a heat shock gene whose expression increases moderately at elevated temperatures.</text>
</comment>
<comment type="miscellaneous">
    <text evidence="3">Present with 119000 molecules/cell in log phase SD medium.</text>
</comment>
<proteinExistence type="evidence at protein level"/>
<sequence>MVKETKFYDILGVPVTATDVEIKKAYRKCALKYHPDKNPSEEAAEKFKEASAAYEILSDPEKRDIYDQFGEDGLSGAGGAGGFPGGGFGFGDDIFSQFFGAGGAQRPRGPQRGKDIKHEISASLEELYKGRTAKLALNKQILCKECEGRGGKKGAVKKCTSCNGQGIKFVTRQMGPMIQRFQTECDVCHGTGDIIDPKDRCKSCNGKKVENERKILEVHVEPGMKDGQRIVFKGEADQAPDVIPGDVVFIVSERPHKSFKRDGDDLVYEAEIDLLTAIAGGEFALEHVSGDWLKVGIVPGEVIAPGMRKVIEGKGMPIPKYGGYGNLIIKFTIKFPENHFTSEENLKKLEEILPPRIVPAIPKKATVDECVLADFDPAKYNRTRASRGGANYDSDEEEQGGEGVQCASQ</sequence>
<reference key="1">
    <citation type="journal article" date="1991" name="J. Cell Biol.">
        <title>Characterization of YDJ1: a yeast homologue of the bacterial dnaJ protein.</title>
        <authorList>
            <person name="Caplan A.J."/>
            <person name="Douglas M.G."/>
        </authorList>
    </citation>
    <scope>NUCLEOTIDE SEQUENCE [GENOMIC DNA]</scope>
    <scope>SUBCELLULAR LOCATION</scope>
</reference>
<reference key="2">
    <citation type="journal article" date="1992" name="Mol. Cell. Biol.">
        <title>MAS5, a yeast homolog of DnaJ involved in mitochondrial protein import.</title>
        <authorList>
            <person name="Atencio D.P."/>
            <person name="Yaffe M.P."/>
        </authorList>
    </citation>
    <scope>NUCLEOTIDE SEQUENCE [GENOMIC DNA]</scope>
</reference>
<reference key="3">
    <citation type="journal article" date="1995" name="Yeast">
        <title>The sequence of a 44 420 bp fragment located on the left arm of chromosome XIV from Saccharomyces cerevisiae.</title>
        <authorList>
            <person name="Bergez P."/>
            <person name="Doignon F."/>
            <person name="Crouzet M."/>
        </authorList>
    </citation>
    <scope>NUCLEOTIDE SEQUENCE [GENOMIC DNA]</scope>
    <source>
        <strain>S288c / FY1676</strain>
    </source>
</reference>
<reference key="4">
    <citation type="journal article" date="1996" name="Yeast">
        <authorList>
            <person name="Bergez P."/>
            <person name="Doignon F."/>
            <person name="Crouzet M."/>
        </authorList>
    </citation>
    <scope>ERRATUM OF PUBMED:8533472</scope>
</reference>
<reference key="5">
    <citation type="journal article" date="1997" name="Nature">
        <title>The nucleotide sequence of Saccharomyces cerevisiae chromosome XIV and its evolutionary implications.</title>
        <authorList>
            <person name="Philippsen P."/>
            <person name="Kleine K."/>
            <person name="Poehlmann R."/>
            <person name="Duesterhoeft A."/>
            <person name="Hamberg K."/>
            <person name="Hegemann J.H."/>
            <person name="Obermaier B."/>
            <person name="Urrestarazu L.A."/>
            <person name="Aert R."/>
            <person name="Albermann K."/>
            <person name="Altmann R."/>
            <person name="Andre B."/>
            <person name="Baladron V."/>
            <person name="Ballesta J.P.G."/>
            <person name="Becam A.-M."/>
            <person name="Beinhauer J.D."/>
            <person name="Boskovic J."/>
            <person name="Buitrago M.J."/>
            <person name="Bussereau F."/>
            <person name="Coster F."/>
            <person name="Crouzet M."/>
            <person name="D'Angelo M."/>
            <person name="Dal Pero F."/>
            <person name="De Antoni A."/>
            <person name="del Rey F."/>
            <person name="Doignon F."/>
            <person name="Domdey H."/>
            <person name="Dubois E."/>
            <person name="Fiedler T.A."/>
            <person name="Fleig U."/>
            <person name="Floeth M."/>
            <person name="Fritz C."/>
            <person name="Gaillardin C."/>
            <person name="Garcia-Cantalejo J.M."/>
            <person name="Glansdorff N."/>
            <person name="Goffeau A."/>
            <person name="Gueldener U."/>
            <person name="Herbert C.J."/>
            <person name="Heumann K."/>
            <person name="Heuss-Neitzel D."/>
            <person name="Hilbert H."/>
            <person name="Hinni K."/>
            <person name="Iraqui Houssaini I."/>
            <person name="Jacquet M."/>
            <person name="Jimenez A."/>
            <person name="Jonniaux J.-L."/>
            <person name="Karpfinger-Hartl L."/>
            <person name="Lanfranchi G."/>
            <person name="Lepingle A."/>
            <person name="Levesque H."/>
            <person name="Lyck R."/>
            <person name="Maftahi M."/>
            <person name="Mallet L."/>
            <person name="Maurer C.T.C."/>
            <person name="Messenguy F."/>
            <person name="Mewes H.-W."/>
            <person name="Moestl D."/>
            <person name="Nasr F."/>
            <person name="Nicaud J.-M."/>
            <person name="Niedenthal R.K."/>
            <person name="Pandolfo D."/>
            <person name="Pierard A."/>
            <person name="Piravandi E."/>
            <person name="Planta R.J."/>
            <person name="Pohl T.M."/>
            <person name="Purnelle B."/>
            <person name="Rebischung C."/>
            <person name="Remacha M.A."/>
            <person name="Revuelta J.L."/>
            <person name="Rinke M."/>
            <person name="Saiz J.E."/>
            <person name="Sartorello F."/>
            <person name="Scherens B."/>
            <person name="Sen-Gupta M."/>
            <person name="Soler-Mira A."/>
            <person name="Urbanus J.H.M."/>
            <person name="Valle G."/>
            <person name="Van Dyck L."/>
            <person name="Verhasselt P."/>
            <person name="Vierendeels F."/>
            <person name="Vissers S."/>
            <person name="Voet M."/>
            <person name="Volckaert G."/>
            <person name="Wach A."/>
            <person name="Wambutt R."/>
            <person name="Wedler H."/>
            <person name="Zollner A."/>
            <person name="Hani J."/>
        </authorList>
    </citation>
    <scope>NUCLEOTIDE SEQUENCE [LARGE SCALE GENOMIC DNA]</scope>
    <source>
        <strain>ATCC 204508 / S288c</strain>
    </source>
</reference>
<reference key="6">
    <citation type="journal article" date="2014" name="G3 (Bethesda)">
        <title>The reference genome sequence of Saccharomyces cerevisiae: Then and now.</title>
        <authorList>
            <person name="Engel S.R."/>
            <person name="Dietrich F.S."/>
            <person name="Fisk D.G."/>
            <person name="Binkley G."/>
            <person name="Balakrishnan R."/>
            <person name="Costanzo M.C."/>
            <person name="Dwight S.S."/>
            <person name="Hitz B.C."/>
            <person name="Karra K."/>
            <person name="Nash R.S."/>
            <person name="Weng S."/>
            <person name="Wong E.D."/>
            <person name="Lloyd P."/>
            <person name="Skrzypek M.S."/>
            <person name="Miyasato S.R."/>
            <person name="Simison M."/>
            <person name="Cherry J.M."/>
        </authorList>
    </citation>
    <scope>GENOME REANNOTATION</scope>
    <source>
        <strain>ATCC 204508 / S288c</strain>
    </source>
</reference>
<reference key="7">
    <citation type="journal article" date="1992" name="J. Biol. Chem.">
        <title>Farnesylation of YDJ1p is required for function at elevated growth temperatures in Saccharomyces cerevisiae.</title>
        <authorList>
            <person name="Caplan A.J."/>
            <person name="Tsai J."/>
            <person name="Casey P.J."/>
            <person name="Douglas M.G."/>
        </authorList>
    </citation>
    <scope>ISOPRENYLATION AT CYS-406</scope>
</reference>
<reference key="8">
    <citation type="journal article" date="2001" name="Mol. Cell. Biol.">
        <title>The Hsp70-Ydj1 molecular chaperone represses the activity of the heme activator protein Hap1 in the absence of heme.</title>
        <authorList>
            <person name="Hon T."/>
            <person name="Lee H.C."/>
            <person name="Hach A."/>
            <person name="Johnson J.L."/>
            <person name="Craig E.A."/>
            <person name="Erdjument-Bromage H."/>
            <person name="Tempst P."/>
            <person name="Zhang L."/>
        </authorList>
    </citation>
    <scope>FUNCTION</scope>
    <scope>SUBUNIT</scope>
</reference>
<reference key="9">
    <citation type="journal article" date="2003" name="Nature">
        <title>Global analysis of protein localization in budding yeast.</title>
        <authorList>
            <person name="Huh W.-K."/>
            <person name="Falvo J.V."/>
            <person name="Gerke L.C."/>
            <person name="Carroll A.S."/>
            <person name="Howson R.W."/>
            <person name="Weissman J.S."/>
            <person name="O'Shea E.K."/>
        </authorList>
    </citation>
    <scope>SUBCELLULAR LOCATION [LARGE SCALE ANALYSIS]</scope>
</reference>
<reference key="10">
    <citation type="journal article" date="2003" name="Nature">
        <title>Global analysis of protein expression in yeast.</title>
        <authorList>
            <person name="Ghaemmaghami S."/>
            <person name="Huh W.-K."/>
            <person name="Bower K."/>
            <person name="Howson R.W."/>
            <person name="Belle A."/>
            <person name="Dephoure N."/>
            <person name="O'Shea E.K."/>
            <person name="Weissman J.S."/>
        </authorList>
    </citation>
    <scope>LEVEL OF PROTEIN EXPRESSION [LARGE SCALE ANALYSIS]</scope>
</reference>
<reference key="11">
    <citation type="journal article" date="2008" name="Mol. Cell. Proteomics">
        <title>A multidimensional chromatography technology for in-depth phosphoproteome analysis.</title>
        <authorList>
            <person name="Albuquerque C.P."/>
            <person name="Smolka M.B."/>
            <person name="Payne S.H."/>
            <person name="Bafna V."/>
            <person name="Eng J."/>
            <person name="Zhou H."/>
        </authorList>
    </citation>
    <scope>IDENTIFICATION BY MASS SPECTROMETRY [LARGE SCALE ANALYSIS]</scope>
</reference>
<reference key="12">
    <citation type="journal article" date="2012" name="Proteomics">
        <title>Sites of ubiquitin attachment in Saccharomyces cerevisiae.</title>
        <authorList>
            <person name="Starita L.M."/>
            <person name="Lo R.S."/>
            <person name="Eng J.K."/>
            <person name="von Haller P.D."/>
            <person name="Fields S."/>
        </authorList>
    </citation>
    <scope>UBIQUITINATION [LARGE SCALE ANALYSIS] AT LYS-198</scope>
    <scope>IDENTIFICATION BY MASS SPECTROMETRY [LARGE SCALE ANALYSIS]</scope>
</reference>
<reference key="13">
    <citation type="journal article" date="2003" name="Structure">
        <title>The crystal structure of the yeast Hsp40 Ydj1 complexed with its peptide substrate.</title>
        <authorList>
            <person name="Li J."/>
            <person name="Qian X."/>
            <person name="Sha B."/>
        </authorList>
    </citation>
    <scope>X-RAY CRYSTALLOGRAPHY (2.7 ANGSTROMS) OF 103-350 IN COMPLEX WITH SUBSTRATE ANALOGS</scope>
    <scope>SUBUNIT</scope>
    <scope>MUTAGENESIS OF PHE-335</scope>
</reference>
<reference key="14">
    <citation type="journal article" date="2005" name="J. Mol. Biol.">
        <title>The crystal structure of the C-terminal fragment of yeast Hsp40 Ydj1 reveals novel dimerization motif for Hsp40.</title>
        <authorList>
            <person name="Wu Y."/>
            <person name="Li J."/>
            <person name="Jin Z."/>
            <person name="Fu Z."/>
            <person name="Sha B."/>
        </authorList>
    </citation>
    <scope>X-RAY CRYSTALLOGRAPHY (2.07 ANGSTROMS) OF 258-378</scope>
</reference>
<keyword id="KW-0002">3D-structure</keyword>
<keyword id="KW-0143">Chaperone</keyword>
<keyword id="KW-0963">Cytoplasm</keyword>
<keyword id="KW-1017">Isopeptide bond</keyword>
<keyword id="KW-0449">Lipoprotein</keyword>
<keyword id="KW-0479">Metal-binding</keyword>
<keyword id="KW-0488">Methylation</keyword>
<keyword id="KW-0636">Prenylation</keyword>
<keyword id="KW-0653">Protein transport</keyword>
<keyword id="KW-1185">Reference proteome</keyword>
<keyword id="KW-0677">Repeat</keyword>
<keyword id="KW-0346">Stress response</keyword>
<keyword id="KW-0813">Transport</keyword>
<keyword id="KW-0832">Ubl conjugation</keyword>
<keyword id="KW-0862">Zinc</keyword>
<keyword id="KW-0863">Zinc-finger</keyword>
<organism>
    <name type="scientific">Saccharomyces cerevisiae (strain ATCC 204508 / S288c)</name>
    <name type="common">Baker's yeast</name>
    <dbReference type="NCBI Taxonomy" id="559292"/>
    <lineage>
        <taxon>Eukaryota</taxon>
        <taxon>Fungi</taxon>
        <taxon>Dikarya</taxon>
        <taxon>Ascomycota</taxon>
        <taxon>Saccharomycotina</taxon>
        <taxon>Saccharomycetes</taxon>
        <taxon>Saccharomycetales</taxon>
        <taxon>Saccharomycetaceae</taxon>
        <taxon>Saccharomyces</taxon>
    </lineage>
</organism>
<dbReference type="EMBL" id="X56560">
    <property type="protein sequence ID" value="CAA39910.1"/>
    <property type="molecule type" value="Genomic_DNA"/>
</dbReference>
<dbReference type="EMBL" id="S74758">
    <property type="protein sequence ID" value="AAB20771.1"/>
    <property type="molecule type" value="Genomic_DNA"/>
</dbReference>
<dbReference type="EMBL" id="U12141">
    <property type="protein sequence ID" value="AAA99647.1"/>
    <property type="molecule type" value="Genomic_DNA"/>
</dbReference>
<dbReference type="EMBL" id="Z71340">
    <property type="protein sequence ID" value="CAA95937.1"/>
    <property type="molecule type" value="Genomic_DNA"/>
</dbReference>
<dbReference type="EMBL" id="BK006947">
    <property type="protein sequence ID" value="DAA10482.1"/>
    <property type="molecule type" value="Genomic_DNA"/>
</dbReference>
<dbReference type="PIR" id="S26703">
    <property type="entry name" value="S26703"/>
</dbReference>
<dbReference type="RefSeq" id="NP_014335.1">
    <property type="nucleotide sequence ID" value="NM_001182902.1"/>
</dbReference>
<dbReference type="PDB" id="1NLT">
    <property type="method" value="X-ray"/>
    <property type="resolution" value="2.70 A"/>
    <property type="chains" value="A=103-350"/>
</dbReference>
<dbReference type="PDB" id="1XAO">
    <property type="method" value="X-ray"/>
    <property type="resolution" value="2.07 A"/>
    <property type="chains" value="A/B=258-378"/>
</dbReference>
<dbReference type="PDB" id="5VSO">
    <property type="method" value="NMR"/>
    <property type="chains" value="A=1-70"/>
</dbReference>
<dbReference type="PDBsum" id="1NLT"/>
<dbReference type="PDBsum" id="1XAO"/>
<dbReference type="PDBsum" id="5VSO"/>
<dbReference type="SMR" id="P25491"/>
<dbReference type="BioGRID" id="35759">
    <property type="interactions" value="982"/>
</dbReference>
<dbReference type="ComplexPortal" id="CPX-1276">
    <property type="entry name" value="HMC complex"/>
</dbReference>
<dbReference type="ComplexPortal" id="CPX-1882">
    <property type="entry name" value="HAP1 transcriptional repressor complex, SSA1 variant"/>
</dbReference>
<dbReference type="ComplexPortal" id="CPX-1883">
    <property type="entry name" value="HAP1 transcriptional repressor complex, SSA2 variant"/>
</dbReference>
<dbReference type="DIP" id="DIP-2251N"/>
<dbReference type="FunCoup" id="P25491">
    <property type="interactions" value="1581"/>
</dbReference>
<dbReference type="IntAct" id="P25491">
    <property type="interactions" value="139"/>
</dbReference>
<dbReference type="MINT" id="P25491"/>
<dbReference type="STRING" id="4932.YNL064C"/>
<dbReference type="TCDB" id="8.A.192.1.6">
    <property type="family name" value="the dnaj homolog (dnaj) family"/>
</dbReference>
<dbReference type="iPTMnet" id="P25491"/>
<dbReference type="PaxDb" id="4932-YNL064C"/>
<dbReference type="PeptideAtlas" id="P25491"/>
<dbReference type="EnsemblFungi" id="YNL064C_mRNA">
    <property type="protein sequence ID" value="YNL064C"/>
    <property type="gene ID" value="YNL064C"/>
</dbReference>
<dbReference type="GeneID" id="855661"/>
<dbReference type="KEGG" id="sce:YNL064C"/>
<dbReference type="AGR" id="SGD:S000005008"/>
<dbReference type="SGD" id="S000005008">
    <property type="gene designation" value="YDJ1"/>
</dbReference>
<dbReference type="VEuPathDB" id="FungiDB:YNL064C"/>
<dbReference type="eggNOG" id="KOG0712">
    <property type="taxonomic scope" value="Eukaryota"/>
</dbReference>
<dbReference type="GeneTree" id="ENSGT00940000154688"/>
<dbReference type="HOGENOM" id="CLU_017633_10_0_1"/>
<dbReference type="InParanoid" id="P25491"/>
<dbReference type="OMA" id="RVCPTCV"/>
<dbReference type="OrthoDB" id="550424at2759"/>
<dbReference type="BioCyc" id="YEAST:G3O-33094-MONOMER"/>
<dbReference type="Reactome" id="R-SCE-3371497">
    <property type="pathway name" value="HSP90 chaperone cycle for steroid hormone receptors (SHR) in the presence of ligand"/>
</dbReference>
<dbReference type="Reactome" id="R-SCE-9841251">
    <property type="pathway name" value="Mitochondrial unfolded protein response (UPRmt)"/>
</dbReference>
<dbReference type="BioGRID-ORCS" id="855661">
    <property type="hits" value="0 hits in 10 CRISPR screens"/>
</dbReference>
<dbReference type="CD-CODE" id="67785C55">
    <property type="entry name" value="Hypersomatic shock foci"/>
</dbReference>
<dbReference type="CD-CODE" id="A777E0F8">
    <property type="entry name" value="P-body"/>
</dbReference>
<dbReference type="CD-CODE" id="E03F929F">
    <property type="entry name" value="Stress granule"/>
</dbReference>
<dbReference type="EvolutionaryTrace" id="P25491"/>
<dbReference type="PRO" id="PR:P25491"/>
<dbReference type="Proteomes" id="UP000002311">
    <property type="component" value="Chromosome XIV"/>
</dbReference>
<dbReference type="RNAct" id="P25491">
    <property type="molecule type" value="protein"/>
</dbReference>
<dbReference type="GO" id="GO:0005737">
    <property type="term" value="C:cytoplasm"/>
    <property type="evidence" value="ECO:0000318"/>
    <property type="project" value="GO_Central"/>
</dbReference>
<dbReference type="GO" id="GO:0005829">
    <property type="term" value="C:cytosol"/>
    <property type="evidence" value="ECO:0000314"/>
    <property type="project" value="SGD"/>
</dbReference>
<dbReference type="GO" id="GO:0005634">
    <property type="term" value="C:nucleus"/>
    <property type="evidence" value="ECO:0000318"/>
    <property type="project" value="GO_Central"/>
</dbReference>
<dbReference type="GO" id="GO:0048471">
    <property type="term" value="C:perinuclear region of cytoplasm"/>
    <property type="evidence" value="ECO:0000314"/>
    <property type="project" value="SGD"/>
</dbReference>
<dbReference type="GO" id="GO:0017053">
    <property type="term" value="C:transcription repressor complex"/>
    <property type="evidence" value="ECO:0000303"/>
    <property type="project" value="ComplexPortal"/>
</dbReference>
<dbReference type="GO" id="GO:0072380">
    <property type="term" value="C:TRC complex"/>
    <property type="evidence" value="ECO:0000314"/>
    <property type="project" value="SGD"/>
</dbReference>
<dbReference type="GO" id="GO:0005524">
    <property type="term" value="F:ATP binding"/>
    <property type="evidence" value="ECO:0007669"/>
    <property type="project" value="InterPro"/>
</dbReference>
<dbReference type="GO" id="GO:0001671">
    <property type="term" value="F:ATPase activator activity"/>
    <property type="evidence" value="ECO:0000314"/>
    <property type="project" value="SGD"/>
</dbReference>
<dbReference type="GO" id="GO:0030544">
    <property type="term" value="F:Hsp70 protein binding"/>
    <property type="evidence" value="ECO:0007669"/>
    <property type="project" value="InterPro"/>
</dbReference>
<dbReference type="GO" id="GO:0051087">
    <property type="term" value="F:protein-folding chaperone binding"/>
    <property type="evidence" value="ECO:0000318"/>
    <property type="project" value="GO_Central"/>
</dbReference>
<dbReference type="GO" id="GO:0051082">
    <property type="term" value="F:unfolded protein binding"/>
    <property type="evidence" value="ECO:0000314"/>
    <property type="project" value="SGD"/>
</dbReference>
<dbReference type="GO" id="GO:0008270">
    <property type="term" value="F:zinc ion binding"/>
    <property type="evidence" value="ECO:0007669"/>
    <property type="project" value="UniProtKB-KW"/>
</dbReference>
<dbReference type="GO" id="GO:0006458">
    <property type="term" value="P:'de novo' protein folding"/>
    <property type="evidence" value="ECO:0000315"/>
    <property type="project" value="SGD"/>
</dbReference>
<dbReference type="GO" id="GO:0034605">
    <property type="term" value="P:cellular response to heat"/>
    <property type="evidence" value="ECO:0000315"/>
    <property type="project" value="SGD"/>
</dbReference>
<dbReference type="GO" id="GO:0009267">
    <property type="term" value="P:cellular response to starvation"/>
    <property type="evidence" value="ECO:0000315"/>
    <property type="project" value="SGD"/>
</dbReference>
<dbReference type="GO" id="GO:0051131">
    <property type="term" value="P:chaperone-mediated protein complex assembly"/>
    <property type="evidence" value="ECO:0000314"/>
    <property type="project" value="CAFA"/>
</dbReference>
<dbReference type="GO" id="GO:0036503">
    <property type="term" value="P:ERAD pathway"/>
    <property type="evidence" value="ECO:0000315"/>
    <property type="project" value="SGD"/>
</dbReference>
<dbReference type="GO" id="GO:0045892">
    <property type="term" value="P:negative regulation of DNA-templated transcription"/>
    <property type="evidence" value="ECO:0000303"/>
    <property type="project" value="ComplexPortal"/>
</dbReference>
<dbReference type="GO" id="GO:0042026">
    <property type="term" value="P:protein refolding"/>
    <property type="evidence" value="ECO:0000314"/>
    <property type="project" value="SGD"/>
</dbReference>
<dbReference type="GO" id="GO:0045047">
    <property type="term" value="P:protein targeting to ER"/>
    <property type="evidence" value="ECO:0000315"/>
    <property type="project" value="SGD"/>
</dbReference>
<dbReference type="GO" id="GO:0006626">
    <property type="term" value="P:protein targeting to mitochondrion"/>
    <property type="evidence" value="ECO:0000315"/>
    <property type="project" value="SGD"/>
</dbReference>
<dbReference type="GO" id="GO:0015031">
    <property type="term" value="P:protein transport"/>
    <property type="evidence" value="ECO:0007669"/>
    <property type="project" value="UniProtKB-KW"/>
</dbReference>
<dbReference type="GO" id="GO:0070482">
    <property type="term" value="P:response to oxygen levels"/>
    <property type="evidence" value="ECO:0000303"/>
    <property type="project" value="ComplexPortal"/>
</dbReference>
<dbReference type="GO" id="GO:0035719">
    <property type="term" value="P:tRNA import into nucleus"/>
    <property type="evidence" value="ECO:0000315"/>
    <property type="project" value="SGD"/>
</dbReference>
<dbReference type="GO" id="GO:0006511">
    <property type="term" value="P:ubiquitin-dependent protein catabolic process"/>
    <property type="evidence" value="ECO:0000315"/>
    <property type="project" value="SGD"/>
</dbReference>
<dbReference type="CDD" id="cd06257">
    <property type="entry name" value="DnaJ"/>
    <property type="match status" value="1"/>
</dbReference>
<dbReference type="CDD" id="cd10747">
    <property type="entry name" value="DnaJ_C"/>
    <property type="match status" value="1"/>
</dbReference>
<dbReference type="CDD" id="cd10719">
    <property type="entry name" value="DnaJ_zf"/>
    <property type="match status" value="1"/>
</dbReference>
<dbReference type="FunFam" id="1.10.287.110:FF:000048">
    <property type="entry name" value="DnaJ family protein"/>
    <property type="match status" value="1"/>
</dbReference>
<dbReference type="FunFam" id="2.10.230.10:FF:000001">
    <property type="entry name" value="DnaJ subfamily A member 2"/>
    <property type="match status" value="1"/>
</dbReference>
<dbReference type="FunFam" id="2.60.260.20:FF:000036">
    <property type="entry name" value="Type I HSP40 co-chaperone"/>
    <property type="match status" value="1"/>
</dbReference>
<dbReference type="Gene3D" id="1.10.287.110">
    <property type="entry name" value="DnaJ domain"/>
    <property type="match status" value="1"/>
</dbReference>
<dbReference type="Gene3D" id="2.10.230.10">
    <property type="entry name" value="Heat shock protein DnaJ, cysteine-rich domain"/>
    <property type="match status" value="1"/>
</dbReference>
<dbReference type="Gene3D" id="2.60.260.20">
    <property type="entry name" value="Urease metallochaperone UreE, N-terminal domain"/>
    <property type="match status" value="2"/>
</dbReference>
<dbReference type="HAMAP" id="MF_01152">
    <property type="entry name" value="DnaJ"/>
    <property type="match status" value="1"/>
</dbReference>
<dbReference type="InterPro" id="IPR012724">
    <property type="entry name" value="DnaJ"/>
</dbReference>
<dbReference type="InterPro" id="IPR002939">
    <property type="entry name" value="DnaJ_C"/>
</dbReference>
<dbReference type="InterPro" id="IPR001623">
    <property type="entry name" value="DnaJ_domain"/>
</dbReference>
<dbReference type="InterPro" id="IPR018253">
    <property type="entry name" value="DnaJ_domain_CS"/>
</dbReference>
<dbReference type="InterPro" id="IPR044713">
    <property type="entry name" value="DNJA1/2-like"/>
</dbReference>
<dbReference type="InterPro" id="IPR008971">
    <property type="entry name" value="HSP40/DnaJ_pept-bd"/>
</dbReference>
<dbReference type="InterPro" id="IPR001305">
    <property type="entry name" value="HSP_DnaJ_Cys-rich_dom"/>
</dbReference>
<dbReference type="InterPro" id="IPR036410">
    <property type="entry name" value="HSP_DnaJ_Cys-rich_dom_sf"/>
</dbReference>
<dbReference type="InterPro" id="IPR036869">
    <property type="entry name" value="J_dom_sf"/>
</dbReference>
<dbReference type="PANTHER" id="PTHR43888">
    <property type="entry name" value="DNAJ-LIKE-2, ISOFORM A-RELATED"/>
    <property type="match status" value="1"/>
</dbReference>
<dbReference type="Pfam" id="PF00226">
    <property type="entry name" value="DnaJ"/>
    <property type="match status" value="1"/>
</dbReference>
<dbReference type="Pfam" id="PF01556">
    <property type="entry name" value="DnaJ_C"/>
    <property type="match status" value="1"/>
</dbReference>
<dbReference type="Pfam" id="PF00684">
    <property type="entry name" value="DnaJ_CXXCXGXG"/>
    <property type="match status" value="1"/>
</dbReference>
<dbReference type="PRINTS" id="PR00625">
    <property type="entry name" value="JDOMAIN"/>
</dbReference>
<dbReference type="SMART" id="SM00271">
    <property type="entry name" value="DnaJ"/>
    <property type="match status" value="1"/>
</dbReference>
<dbReference type="SUPFAM" id="SSF46565">
    <property type="entry name" value="Chaperone J-domain"/>
    <property type="match status" value="1"/>
</dbReference>
<dbReference type="SUPFAM" id="SSF57938">
    <property type="entry name" value="DnaJ/Hsp40 cysteine-rich domain"/>
    <property type="match status" value="1"/>
</dbReference>
<dbReference type="SUPFAM" id="SSF49493">
    <property type="entry name" value="HSP40/DnaJ peptide-binding domain"/>
    <property type="match status" value="2"/>
</dbReference>
<dbReference type="PROSITE" id="PS00636">
    <property type="entry name" value="DNAJ_1"/>
    <property type="match status" value="1"/>
</dbReference>
<dbReference type="PROSITE" id="PS50076">
    <property type="entry name" value="DNAJ_2"/>
    <property type="match status" value="1"/>
</dbReference>
<dbReference type="PROSITE" id="PS51188">
    <property type="entry name" value="ZF_CR"/>
    <property type="match status" value="1"/>
</dbReference>